<sequence length="306" mass="34455">MELKDYYAIMGVKPTDDLKTIKTAYRRLARKYHPDVSKEPDAEARFKEVAEAWEVLSDEQRRAEYDQMWQHRNDPQFNRQFHHGDGQSFNAEDFDDIFSSIFGQHARQSRQRPAARGHDIEIEVAVFLEETLTEHKRTISYNLPVYNAFGMIEQEIPKTLNVKIPAGVGNGQRIRLKGQGTPGENGGPNGDLWLVIHIAPHPLFDIVGQDLEIVVPVSPWEAALGTKVTVPTLKESILLTIPPGSQAGQRLRVKGKGLVSKKQTGDLYAVLKIVMPPKPDENTAALWQQLADAQSSFDPRKDWGKA</sequence>
<gene>
    <name evidence="1" type="primary">cbpA</name>
    <name type="ordered locus">SF1004</name>
    <name type="ordered locus">S1073</name>
</gene>
<accession>Q7C254</accession>
<accession>Q83LL1</accession>
<dbReference type="EMBL" id="AE005674">
    <property type="protein sequence ID" value="AAN42630.1"/>
    <property type="molecule type" value="Genomic_DNA"/>
</dbReference>
<dbReference type="EMBL" id="AE014073">
    <property type="protein sequence ID" value="AAP16514.1"/>
    <property type="molecule type" value="Genomic_DNA"/>
</dbReference>
<dbReference type="RefSeq" id="NP_706923.1">
    <property type="nucleotide sequence ID" value="NC_004337.2"/>
</dbReference>
<dbReference type="RefSeq" id="WP_000420619.1">
    <property type="nucleotide sequence ID" value="NZ_WPGW01000289.1"/>
</dbReference>
<dbReference type="SMR" id="Q7C254"/>
<dbReference type="STRING" id="198214.SF1004"/>
<dbReference type="PaxDb" id="198214-SF1004"/>
<dbReference type="GeneID" id="1023975"/>
<dbReference type="KEGG" id="sfl:SF1004"/>
<dbReference type="KEGG" id="sfx:S1073"/>
<dbReference type="PATRIC" id="fig|198214.7.peg.1167"/>
<dbReference type="HOGENOM" id="CLU_017633_0_0_6"/>
<dbReference type="Proteomes" id="UP000001006">
    <property type="component" value="Chromosome"/>
</dbReference>
<dbReference type="Proteomes" id="UP000002673">
    <property type="component" value="Chromosome"/>
</dbReference>
<dbReference type="GO" id="GO:0005737">
    <property type="term" value="C:cytoplasm"/>
    <property type="evidence" value="ECO:0007669"/>
    <property type="project" value="UniProtKB-UniRule"/>
</dbReference>
<dbReference type="GO" id="GO:0009295">
    <property type="term" value="C:nucleoid"/>
    <property type="evidence" value="ECO:0007669"/>
    <property type="project" value="UniProtKB-SubCell"/>
</dbReference>
<dbReference type="GO" id="GO:0003681">
    <property type="term" value="F:bent DNA binding"/>
    <property type="evidence" value="ECO:0007669"/>
    <property type="project" value="UniProtKB-UniRule"/>
</dbReference>
<dbReference type="GO" id="GO:0051082">
    <property type="term" value="F:unfolded protein binding"/>
    <property type="evidence" value="ECO:0007669"/>
    <property type="project" value="InterPro"/>
</dbReference>
<dbReference type="GO" id="GO:0051085">
    <property type="term" value="P:chaperone cofactor-dependent protein refolding"/>
    <property type="evidence" value="ECO:0007669"/>
    <property type="project" value="TreeGrafter"/>
</dbReference>
<dbReference type="GO" id="GO:0042026">
    <property type="term" value="P:protein refolding"/>
    <property type="evidence" value="ECO:0007669"/>
    <property type="project" value="TreeGrafter"/>
</dbReference>
<dbReference type="CDD" id="cd06257">
    <property type="entry name" value="DnaJ"/>
    <property type="match status" value="1"/>
</dbReference>
<dbReference type="CDD" id="cd10747">
    <property type="entry name" value="DnaJ_C"/>
    <property type="match status" value="1"/>
</dbReference>
<dbReference type="FunFam" id="1.10.287.110:FF:000013">
    <property type="entry name" value="Curved DNA-binding protein"/>
    <property type="match status" value="1"/>
</dbReference>
<dbReference type="FunFam" id="2.60.260.20:FF:000008">
    <property type="entry name" value="Curved DNA-binding protein"/>
    <property type="match status" value="1"/>
</dbReference>
<dbReference type="FunFam" id="2.60.260.20:FF:000013">
    <property type="entry name" value="DnaJ subfamily B member 11"/>
    <property type="match status" value="1"/>
</dbReference>
<dbReference type="Gene3D" id="1.10.287.110">
    <property type="entry name" value="DnaJ domain"/>
    <property type="match status" value="1"/>
</dbReference>
<dbReference type="Gene3D" id="1.20.5.460">
    <property type="entry name" value="Single helix bin"/>
    <property type="match status" value="1"/>
</dbReference>
<dbReference type="Gene3D" id="2.60.260.20">
    <property type="entry name" value="Urease metallochaperone UreE, N-terminal domain"/>
    <property type="match status" value="2"/>
</dbReference>
<dbReference type="HAMAP" id="MF_01154">
    <property type="entry name" value="CbpA"/>
    <property type="match status" value="1"/>
</dbReference>
<dbReference type="InterPro" id="IPR023859">
    <property type="entry name" value="DNA-bd_curved-DNA"/>
</dbReference>
<dbReference type="InterPro" id="IPR002939">
    <property type="entry name" value="DnaJ_C"/>
</dbReference>
<dbReference type="InterPro" id="IPR001623">
    <property type="entry name" value="DnaJ_domain"/>
</dbReference>
<dbReference type="InterPro" id="IPR018253">
    <property type="entry name" value="DnaJ_domain_CS"/>
</dbReference>
<dbReference type="InterPro" id="IPR008971">
    <property type="entry name" value="HSP40/DnaJ_pept-bd"/>
</dbReference>
<dbReference type="InterPro" id="IPR036869">
    <property type="entry name" value="J_dom_sf"/>
</dbReference>
<dbReference type="NCBIfam" id="NF007618">
    <property type="entry name" value="PRK10266.1"/>
    <property type="match status" value="1"/>
</dbReference>
<dbReference type="PANTHER" id="PTHR43096">
    <property type="entry name" value="DNAJ HOMOLOG 1, MITOCHONDRIAL-RELATED"/>
    <property type="match status" value="1"/>
</dbReference>
<dbReference type="PANTHER" id="PTHR43096:SF52">
    <property type="entry name" value="DNAJ HOMOLOG 1, MITOCHONDRIAL-RELATED"/>
    <property type="match status" value="1"/>
</dbReference>
<dbReference type="Pfam" id="PF00226">
    <property type="entry name" value="DnaJ"/>
    <property type="match status" value="1"/>
</dbReference>
<dbReference type="Pfam" id="PF01556">
    <property type="entry name" value="DnaJ_C"/>
    <property type="match status" value="1"/>
</dbReference>
<dbReference type="PRINTS" id="PR00625">
    <property type="entry name" value="JDOMAIN"/>
</dbReference>
<dbReference type="SMART" id="SM00271">
    <property type="entry name" value="DnaJ"/>
    <property type="match status" value="1"/>
</dbReference>
<dbReference type="SUPFAM" id="SSF46565">
    <property type="entry name" value="Chaperone J-domain"/>
    <property type="match status" value="1"/>
</dbReference>
<dbReference type="SUPFAM" id="SSF49493">
    <property type="entry name" value="HSP40/DnaJ peptide-binding domain"/>
    <property type="match status" value="2"/>
</dbReference>
<dbReference type="PROSITE" id="PS00636">
    <property type="entry name" value="DNAJ_1"/>
    <property type="match status" value="1"/>
</dbReference>
<dbReference type="PROSITE" id="PS50076">
    <property type="entry name" value="DNAJ_2"/>
    <property type="match status" value="1"/>
</dbReference>
<comment type="function">
    <text evidence="1">DNA-binding protein that preferentially recognizes a curved DNA sequence. It is probably a functional analog of DnaJ; displays overlapping activities with DnaJ, but functions under different conditions, probably acting as a molecular chaperone in an adaptive response to environmental stresses other than heat shock. Lacks autonomous chaperone activity; binds native substrates and targets them for recognition by DnaK. Its activity is inhibited by the binding of CbpM.</text>
</comment>
<comment type="subcellular location">
    <subcellularLocation>
        <location evidence="1">Cytoplasm</location>
        <location evidence="1">Nucleoid</location>
    </subcellularLocation>
</comment>
<keyword id="KW-0143">Chaperone</keyword>
<keyword id="KW-0963">Cytoplasm</keyword>
<keyword id="KW-0238">DNA-binding</keyword>
<keyword id="KW-1185">Reference proteome</keyword>
<organism>
    <name type="scientific">Shigella flexneri</name>
    <dbReference type="NCBI Taxonomy" id="623"/>
    <lineage>
        <taxon>Bacteria</taxon>
        <taxon>Pseudomonadati</taxon>
        <taxon>Pseudomonadota</taxon>
        <taxon>Gammaproteobacteria</taxon>
        <taxon>Enterobacterales</taxon>
        <taxon>Enterobacteriaceae</taxon>
        <taxon>Shigella</taxon>
    </lineage>
</organism>
<protein>
    <recommendedName>
        <fullName evidence="1">Curved DNA-binding protein</fullName>
    </recommendedName>
</protein>
<name>CBPA_SHIFL</name>
<proteinExistence type="inferred from homology"/>
<reference key="1">
    <citation type="journal article" date="2002" name="Nucleic Acids Res.">
        <title>Genome sequence of Shigella flexneri 2a: insights into pathogenicity through comparison with genomes of Escherichia coli K12 and O157.</title>
        <authorList>
            <person name="Jin Q."/>
            <person name="Yuan Z."/>
            <person name="Xu J."/>
            <person name="Wang Y."/>
            <person name="Shen Y."/>
            <person name="Lu W."/>
            <person name="Wang J."/>
            <person name="Liu H."/>
            <person name="Yang J."/>
            <person name="Yang F."/>
            <person name="Zhang X."/>
            <person name="Zhang J."/>
            <person name="Yang G."/>
            <person name="Wu H."/>
            <person name="Qu D."/>
            <person name="Dong J."/>
            <person name="Sun L."/>
            <person name="Xue Y."/>
            <person name="Zhao A."/>
            <person name="Gao Y."/>
            <person name="Zhu J."/>
            <person name="Kan B."/>
            <person name="Ding K."/>
            <person name="Chen S."/>
            <person name="Cheng H."/>
            <person name="Yao Z."/>
            <person name="He B."/>
            <person name="Chen R."/>
            <person name="Ma D."/>
            <person name="Qiang B."/>
            <person name="Wen Y."/>
            <person name="Hou Y."/>
            <person name="Yu J."/>
        </authorList>
    </citation>
    <scope>NUCLEOTIDE SEQUENCE [LARGE SCALE GENOMIC DNA]</scope>
    <source>
        <strain>301 / Serotype 2a</strain>
    </source>
</reference>
<reference key="2">
    <citation type="journal article" date="2003" name="Infect. Immun.">
        <title>Complete genome sequence and comparative genomics of Shigella flexneri serotype 2a strain 2457T.</title>
        <authorList>
            <person name="Wei J."/>
            <person name="Goldberg M.B."/>
            <person name="Burland V."/>
            <person name="Venkatesan M.M."/>
            <person name="Deng W."/>
            <person name="Fournier G."/>
            <person name="Mayhew G.F."/>
            <person name="Plunkett G. III"/>
            <person name="Rose D.J."/>
            <person name="Darling A."/>
            <person name="Mau B."/>
            <person name="Perna N.T."/>
            <person name="Payne S.M."/>
            <person name="Runyen-Janecky L.J."/>
            <person name="Zhou S."/>
            <person name="Schwartz D.C."/>
            <person name="Blattner F.R."/>
        </authorList>
    </citation>
    <scope>NUCLEOTIDE SEQUENCE [LARGE SCALE GENOMIC DNA]</scope>
    <source>
        <strain>ATCC 700930 / 2457T / Serotype 2a</strain>
    </source>
</reference>
<feature type="chain" id="PRO_0000169996" description="Curved DNA-binding protein">
    <location>
        <begin position="1"/>
        <end position="306"/>
    </location>
</feature>
<feature type="domain" description="J" evidence="1">
    <location>
        <begin position="5"/>
        <end position="69"/>
    </location>
</feature>
<evidence type="ECO:0000255" key="1">
    <source>
        <dbReference type="HAMAP-Rule" id="MF_01154"/>
    </source>
</evidence>